<organism>
    <name type="scientific">Acinetobacter baumannii (strain AYE)</name>
    <dbReference type="NCBI Taxonomy" id="509173"/>
    <lineage>
        <taxon>Bacteria</taxon>
        <taxon>Pseudomonadati</taxon>
        <taxon>Pseudomonadota</taxon>
        <taxon>Gammaproteobacteria</taxon>
        <taxon>Moraxellales</taxon>
        <taxon>Moraxellaceae</taxon>
        <taxon>Acinetobacter</taxon>
        <taxon>Acinetobacter calcoaceticus/baumannii complex</taxon>
    </lineage>
</organism>
<comment type="function">
    <text evidence="1">Catalyzes the oxidation of either pyridoxine 5'-phosphate (PNP) or pyridoxamine 5'-phosphate (PMP) into pyridoxal 5'-phosphate (PLP).</text>
</comment>
<comment type="catalytic activity">
    <reaction evidence="1">
        <text>pyridoxamine 5'-phosphate + O2 + H2O = pyridoxal 5'-phosphate + H2O2 + NH4(+)</text>
        <dbReference type="Rhea" id="RHEA:15817"/>
        <dbReference type="ChEBI" id="CHEBI:15377"/>
        <dbReference type="ChEBI" id="CHEBI:15379"/>
        <dbReference type="ChEBI" id="CHEBI:16240"/>
        <dbReference type="ChEBI" id="CHEBI:28938"/>
        <dbReference type="ChEBI" id="CHEBI:58451"/>
        <dbReference type="ChEBI" id="CHEBI:597326"/>
        <dbReference type="EC" id="1.4.3.5"/>
    </reaction>
</comment>
<comment type="catalytic activity">
    <reaction evidence="1">
        <text>pyridoxine 5'-phosphate + O2 = pyridoxal 5'-phosphate + H2O2</text>
        <dbReference type="Rhea" id="RHEA:15149"/>
        <dbReference type="ChEBI" id="CHEBI:15379"/>
        <dbReference type="ChEBI" id="CHEBI:16240"/>
        <dbReference type="ChEBI" id="CHEBI:58589"/>
        <dbReference type="ChEBI" id="CHEBI:597326"/>
        <dbReference type="EC" id="1.4.3.5"/>
    </reaction>
</comment>
<comment type="cofactor">
    <cofactor evidence="1">
        <name>FMN</name>
        <dbReference type="ChEBI" id="CHEBI:58210"/>
    </cofactor>
    <text evidence="1">Binds 1 FMN per subunit.</text>
</comment>
<comment type="pathway">
    <text evidence="1">Cofactor metabolism; pyridoxal 5'-phosphate salvage; pyridoxal 5'-phosphate from pyridoxamine 5'-phosphate: step 1/1.</text>
</comment>
<comment type="pathway">
    <text evidence="1">Cofactor metabolism; pyridoxal 5'-phosphate salvage; pyridoxal 5'-phosphate from pyridoxine 5'-phosphate: step 1/1.</text>
</comment>
<comment type="subunit">
    <text evidence="1">Homodimer.</text>
</comment>
<comment type="similarity">
    <text evidence="1">Belongs to the pyridoxamine 5'-phosphate oxidase family.</text>
</comment>
<accession>B0V9C9</accession>
<feature type="chain" id="PRO_1000186283" description="Pyridoxine/pyridoxamine 5'-phosphate oxidase">
    <location>
        <begin position="1"/>
        <end position="218"/>
    </location>
</feature>
<feature type="binding site" evidence="1">
    <location>
        <begin position="12"/>
        <end position="15"/>
    </location>
    <ligand>
        <name>substrate</name>
    </ligand>
</feature>
<feature type="binding site" evidence="1">
    <location>
        <begin position="65"/>
        <end position="70"/>
    </location>
    <ligand>
        <name>FMN</name>
        <dbReference type="ChEBI" id="CHEBI:58210"/>
    </ligand>
</feature>
<feature type="binding site" evidence="1">
    <location>
        <position position="70"/>
    </location>
    <ligand>
        <name>substrate</name>
    </ligand>
</feature>
<feature type="binding site" evidence="1">
    <location>
        <begin position="80"/>
        <end position="81"/>
    </location>
    <ligand>
        <name>FMN</name>
        <dbReference type="ChEBI" id="CHEBI:58210"/>
    </ligand>
</feature>
<feature type="binding site" evidence="1">
    <location>
        <position position="87"/>
    </location>
    <ligand>
        <name>FMN</name>
        <dbReference type="ChEBI" id="CHEBI:58210"/>
    </ligand>
</feature>
<feature type="binding site" evidence="1">
    <location>
        <position position="109"/>
    </location>
    <ligand>
        <name>FMN</name>
        <dbReference type="ChEBI" id="CHEBI:58210"/>
    </ligand>
</feature>
<feature type="binding site" evidence="1">
    <location>
        <position position="127"/>
    </location>
    <ligand>
        <name>substrate</name>
    </ligand>
</feature>
<feature type="binding site" evidence="1">
    <location>
        <position position="131"/>
    </location>
    <ligand>
        <name>substrate</name>
    </ligand>
</feature>
<feature type="binding site" evidence="1">
    <location>
        <position position="135"/>
    </location>
    <ligand>
        <name>substrate</name>
    </ligand>
</feature>
<feature type="binding site" evidence="1">
    <location>
        <begin position="145"/>
        <end position="146"/>
    </location>
    <ligand>
        <name>FMN</name>
        <dbReference type="ChEBI" id="CHEBI:58210"/>
    </ligand>
</feature>
<feature type="binding site" evidence="1">
    <location>
        <position position="191"/>
    </location>
    <ligand>
        <name>FMN</name>
        <dbReference type="ChEBI" id="CHEBI:58210"/>
    </ligand>
</feature>
<feature type="binding site" evidence="1">
    <location>
        <begin position="197"/>
        <end position="199"/>
    </location>
    <ligand>
        <name>substrate</name>
    </ligand>
</feature>
<feature type="binding site" evidence="1">
    <location>
        <position position="201"/>
    </location>
    <ligand>
        <name>FMN</name>
        <dbReference type="ChEBI" id="CHEBI:58210"/>
    </ligand>
</feature>
<dbReference type="EC" id="1.4.3.5" evidence="1"/>
<dbReference type="EMBL" id="CU459141">
    <property type="protein sequence ID" value="CAM85152.1"/>
    <property type="molecule type" value="Genomic_DNA"/>
</dbReference>
<dbReference type="RefSeq" id="WP_001286115.1">
    <property type="nucleotide sequence ID" value="NZ_JBDGFB010000004.1"/>
</dbReference>
<dbReference type="SMR" id="B0V9C9"/>
<dbReference type="EnsemblBacteria" id="CAM85152">
    <property type="protein sequence ID" value="CAM85152"/>
    <property type="gene ID" value="ABAYE0168"/>
</dbReference>
<dbReference type="KEGG" id="aby:ABAYE0168"/>
<dbReference type="HOGENOM" id="CLU_032263_2_2_6"/>
<dbReference type="UniPathway" id="UPA01068">
    <property type="reaction ID" value="UER00304"/>
</dbReference>
<dbReference type="UniPathway" id="UPA01068">
    <property type="reaction ID" value="UER00305"/>
</dbReference>
<dbReference type="GO" id="GO:0010181">
    <property type="term" value="F:FMN binding"/>
    <property type="evidence" value="ECO:0007669"/>
    <property type="project" value="UniProtKB-UniRule"/>
</dbReference>
<dbReference type="GO" id="GO:0004733">
    <property type="term" value="F:pyridoxamine phosphate oxidase activity"/>
    <property type="evidence" value="ECO:0007669"/>
    <property type="project" value="UniProtKB-UniRule"/>
</dbReference>
<dbReference type="GO" id="GO:0008615">
    <property type="term" value="P:pyridoxine biosynthetic process"/>
    <property type="evidence" value="ECO:0007669"/>
    <property type="project" value="UniProtKB-KW"/>
</dbReference>
<dbReference type="Gene3D" id="2.30.110.10">
    <property type="entry name" value="Electron Transport, Fmn-binding Protein, Chain A"/>
    <property type="match status" value="1"/>
</dbReference>
<dbReference type="HAMAP" id="MF_01629">
    <property type="entry name" value="PdxH"/>
    <property type="match status" value="1"/>
</dbReference>
<dbReference type="InterPro" id="IPR000659">
    <property type="entry name" value="Pyridox_Oxase"/>
</dbReference>
<dbReference type="InterPro" id="IPR019740">
    <property type="entry name" value="Pyridox_Oxase_CS"/>
</dbReference>
<dbReference type="InterPro" id="IPR011576">
    <property type="entry name" value="Pyridox_Oxase_N"/>
</dbReference>
<dbReference type="InterPro" id="IPR019576">
    <property type="entry name" value="Pyridoxamine_oxidase_dimer_C"/>
</dbReference>
<dbReference type="InterPro" id="IPR012349">
    <property type="entry name" value="Split_barrel_FMN-bd"/>
</dbReference>
<dbReference type="NCBIfam" id="TIGR00558">
    <property type="entry name" value="pdxH"/>
    <property type="match status" value="1"/>
</dbReference>
<dbReference type="NCBIfam" id="NF004231">
    <property type="entry name" value="PRK05679.1"/>
    <property type="match status" value="1"/>
</dbReference>
<dbReference type="PANTHER" id="PTHR10851:SF0">
    <property type="entry name" value="PYRIDOXINE-5'-PHOSPHATE OXIDASE"/>
    <property type="match status" value="1"/>
</dbReference>
<dbReference type="PANTHER" id="PTHR10851">
    <property type="entry name" value="PYRIDOXINE-5-PHOSPHATE OXIDASE"/>
    <property type="match status" value="1"/>
</dbReference>
<dbReference type="Pfam" id="PF10590">
    <property type="entry name" value="PNP_phzG_C"/>
    <property type="match status" value="1"/>
</dbReference>
<dbReference type="Pfam" id="PF01243">
    <property type="entry name" value="PNPOx_N"/>
    <property type="match status" value="1"/>
</dbReference>
<dbReference type="PIRSF" id="PIRSF000190">
    <property type="entry name" value="Pyd_amn-ph_oxd"/>
    <property type="match status" value="1"/>
</dbReference>
<dbReference type="SUPFAM" id="SSF50475">
    <property type="entry name" value="FMN-binding split barrel"/>
    <property type="match status" value="1"/>
</dbReference>
<dbReference type="PROSITE" id="PS01064">
    <property type="entry name" value="PYRIDOX_OXIDASE"/>
    <property type="match status" value="1"/>
</dbReference>
<name>PDXH_ACIBY</name>
<proteinExistence type="inferred from homology"/>
<keyword id="KW-0285">Flavoprotein</keyword>
<keyword id="KW-0288">FMN</keyword>
<keyword id="KW-0560">Oxidoreductase</keyword>
<keyword id="KW-0664">Pyridoxine biosynthesis</keyword>
<reference key="1">
    <citation type="journal article" date="2008" name="PLoS ONE">
        <title>Comparative analysis of Acinetobacters: three genomes for three lifestyles.</title>
        <authorList>
            <person name="Vallenet D."/>
            <person name="Nordmann P."/>
            <person name="Barbe V."/>
            <person name="Poirel L."/>
            <person name="Mangenot S."/>
            <person name="Bataille E."/>
            <person name="Dossat C."/>
            <person name="Gas S."/>
            <person name="Kreimeyer A."/>
            <person name="Lenoble P."/>
            <person name="Oztas S."/>
            <person name="Poulain J."/>
            <person name="Segurens B."/>
            <person name="Robert C."/>
            <person name="Abergel C."/>
            <person name="Claverie J.-M."/>
            <person name="Raoult D."/>
            <person name="Medigue C."/>
            <person name="Weissenbach J."/>
            <person name="Cruveiller S."/>
        </authorList>
    </citation>
    <scope>NUCLEOTIDE SEQUENCE [LARGE SCALE GENOMIC DNA]</scope>
    <source>
        <strain>AYE</strain>
    </source>
</reference>
<protein>
    <recommendedName>
        <fullName evidence="1">Pyridoxine/pyridoxamine 5'-phosphate oxidase</fullName>
        <ecNumber evidence="1">1.4.3.5</ecNumber>
    </recommendedName>
    <alternativeName>
        <fullName evidence="1">PNP/PMP oxidase</fullName>
        <shortName evidence="1">PNPOx</shortName>
    </alternativeName>
    <alternativeName>
        <fullName evidence="1">Pyridoxal 5'-phosphate synthase</fullName>
    </alternativeName>
</protein>
<gene>
    <name evidence="1" type="primary">pdxH</name>
    <name type="ordered locus">ABAYE0168</name>
</gene>
<sequence length="218" mass="25474">MSDVIKDLSELRLSYEQGELYETQVASNPHEQFLGWFNHALAANLHEPYAMSLATASASGRPHVRTVLLRGATEAGYDFYTNYDSQKGIDLAENPYAELLFYWPSLERQVRVGGHVVKIPEQESTDYYHKRPRDSQIAAHISTPQSGKIESRELLQQRFQDLQQQVQSREVLDKPEFWGGYRLQPDYYEFWQGRPNRLHDRLSYEKIDGQWTLHRLMP</sequence>
<evidence type="ECO:0000255" key="1">
    <source>
        <dbReference type="HAMAP-Rule" id="MF_01629"/>
    </source>
</evidence>